<organism>
    <name type="scientific">Zymomonas mobilis subsp. mobilis (strain ATCC 31821 / ZM4 / CP4)</name>
    <dbReference type="NCBI Taxonomy" id="264203"/>
    <lineage>
        <taxon>Bacteria</taxon>
        <taxon>Pseudomonadati</taxon>
        <taxon>Pseudomonadota</taxon>
        <taxon>Alphaproteobacteria</taxon>
        <taxon>Sphingomonadales</taxon>
        <taxon>Zymomonadaceae</taxon>
        <taxon>Zymomonas</taxon>
    </lineage>
</organism>
<comment type="function">
    <text evidence="1">This protein is involved in the repair of mismatches in DNA. It is possible that it carries out the mismatch recognition step. This protein has a weak ATPase activity.</text>
</comment>
<comment type="similarity">
    <text evidence="1">Belongs to the DNA mismatch repair MutS family.</text>
</comment>
<feature type="chain" id="PRO_0000224421" description="DNA mismatch repair protein MutS">
    <location>
        <begin position="1"/>
        <end position="869"/>
    </location>
</feature>
<feature type="binding site" evidence="1">
    <location>
        <begin position="618"/>
        <end position="625"/>
    </location>
    <ligand>
        <name>ATP</name>
        <dbReference type="ChEBI" id="CHEBI:30616"/>
    </ligand>
</feature>
<accession>Q5NL79</accession>
<proteinExistence type="inferred from homology"/>
<keyword id="KW-0067">ATP-binding</keyword>
<keyword id="KW-0227">DNA damage</keyword>
<keyword id="KW-0234">DNA repair</keyword>
<keyword id="KW-0238">DNA-binding</keyword>
<keyword id="KW-0547">Nucleotide-binding</keyword>
<keyword id="KW-1185">Reference proteome</keyword>
<dbReference type="EMBL" id="AE008692">
    <property type="protein sequence ID" value="AAV90531.2"/>
    <property type="molecule type" value="Genomic_DNA"/>
</dbReference>
<dbReference type="RefSeq" id="WP_011241632.1">
    <property type="nucleotide sequence ID" value="NZ_CP035711.1"/>
</dbReference>
<dbReference type="SMR" id="Q5NL79"/>
<dbReference type="STRING" id="264203.ZMO1907"/>
<dbReference type="KEGG" id="zmo:ZMO1907"/>
<dbReference type="eggNOG" id="COG0249">
    <property type="taxonomic scope" value="Bacteria"/>
</dbReference>
<dbReference type="HOGENOM" id="CLU_002472_4_0_5"/>
<dbReference type="Proteomes" id="UP000001173">
    <property type="component" value="Chromosome"/>
</dbReference>
<dbReference type="GO" id="GO:0005829">
    <property type="term" value="C:cytosol"/>
    <property type="evidence" value="ECO:0007669"/>
    <property type="project" value="TreeGrafter"/>
</dbReference>
<dbReference type="GO" id="GO:0005524">
    <property type="term" value="F:ATP binding"/>
    <property type="evidence" value="ECO:0007669"/>
    <property type="project" value="UniProtKB-UniRule"/>
</dbReference>
<dbReference type="GO" id="GO:0140664">
    <property type="term" value="F:ATP-dependent DNA damage sensor activity"/>
    <property type="evidence" value="ECO:0007669"/>
    <property type="project" value="InterPro"/>
</dbReference>
<dbReference type="GO" id="GO:0003684">
    <property type="term" value="F:damaged DNA binding"/>
    <property type="evidence" value="ECO:0007669"/>
    <property type="project" value="UniProtKB-UniRule"/>
</dbReference>
<dbReference type="GO" id="GO:0030983">
    <property type="term" value="F:mismatched DNA binding"/>
    <property type="evidence" value="ECO:0007669"/>
    <property type="project" value="InterPro"/>
</dbReference>
<dbReference type="GO" id="GO:0006298">
    <property type="term" value="P:mismatch repair"/>
    <property type="evidence" value="ECO:0007669"/>
    <property type="project" value="UniProtKB-UniRule"/>
</dbReference>
<dbReference type="CDD" id="cd03284">
    <property type="entry name" value="ABC_MutS1"/>
    <property type="match status" value="1"/>
</dbReference>
<dbReference type="FunFam" id="3.40.1170.10:FF:000001">
    <property type="entry name" value="DNA mismatch repair protein MutS"/>
    <property type="match status" value="1"/>
</dbReference>
<dbReference type="FunFam" id="3.40.50.300:FF:000870">
    <property type="entry name" value="MutS protein homolog 4"/>
    <property type="match status" value="1"/>
</dbReference>
<dbReference type="Gene3D" id="1.10.1420.10">
    <property type="match status" value="2"/>
</dbReference>
<dbReference type="Gene3D" id="6.10.140.430">
    <property type="match status" value="1"/>
</dbReference>
<dbReference type="Gene3D" id="3.40.1170.10">
    <property type="entry name" value="DNA repair protein MutS, domain I"/>
    <property type="match status" value="1"/>
</dbReference>
<dbReference type="Gene3D" id="3.30.420.110">
    <property type="entry name" value="MutS, connector domain"/>
    <property type="match status" value="1"/>
</dbReference>
<dbReference type="Gene3D" id="3.40.50.300">
    <property type="entry name" value="P-loop containing nucleotide triphosphate hydrolases"/>
    <property type="match status" value="1"/>
</dbReference>
<dbReference type="HAMAP" id="MF_00096">
    <property type="entry name" value="MutS"/>
    <property type="match status" value="1"/>
</dbReference>
<dbReference type="InterPro" id="IPR005748">
    <property type="entry name" value="DNA_mismatch_repair_MutS"/>
</dbReference>
<dbReference type="InterPro" id="IPR007695">
    <property type="entry name" value="DNA_mismatch_repair_MutS-lik_N"/>
</dbReference>
<dbReference type="InterPro" id="IPR017261">
    <property type="entry name" value="DNA_mismatch_repair_MutS/MSH"/>
</dbReference>
<dbReference type="InterPro" id="IPR000432">
    <property type="entry name" value="DNA_mismatch_repair_MutS_C"/>
</dbReference>
<dbReference type="InterPro" id="IPR007861">
    <property type="entry name" value="DNA_mismatch_repair_MutS_clamp"/>
</dbReference>
<dbReference type="InterPro" id="IPR007696">
    <property type="entry name" value="DNA_mismatch_repair_MutS_core"/>
</dbReference>
<dbReference type="InterPro" id="IPR016151">
    <property type="entry name" value="DNA_mismatch_repair_MutS_N"/>
</dbReference>
<dbReference type="InterPro" id="IPR036187">
    <property type="entry name" value="DNA_mismatch_repair_MutS_sf"/>
</dbReference>
<dbReference type="InterPro" id="IPR007860">
    <property type="entry name" value="DNA_mmatch_repair_MutS_con_dom"/>
</dbReference>
<dbReference type="InterPro" id="IPR045076">
    <property type="entry name" value="MutS"/>
</dbReference>
<dbReference type="InterPro" id="IPR036678">
    <property type="entry name" value="MutS_con_dom_sf"/>
</dbReference>
<dbReference type="InterPro" id="IPR027417">
    <property type="entry name" value="P-loop_NTPase"/>
</dbReference>
<dbReference type="NCBIfam" id="TIGR01070">
    <property type="entry name" value="mutS1"/>
    <property type="match status" value="1"/>
</dbReference>
<dbReference type="NCBIfam" id="NF003810">
    <property type="entry name" value="PRK05399.1"/>
    <property type="match status" value="1"/>
</dbReference>
<dbReference type="PANTHER" id="PTHR11361:SF34">
    <property type="entry name" value="DNA MISMATCH REPAIR PROTEIN MSH1, MITOCHONDRIAL"/>
    <property type="match status" value="1"/>
</dbReference>
<dbReference type="PANTHER" id="PTHR11361">
    <property type="entry name" value="DNA MISMATCH REPAIR PROTEIN MUTS FAMILY MEMBER"/>
    <property type="match status" value="1"/>
</dbReference>
<dbReference type="Pfam" id="PF01624">
    <property type="entry name" value="MutS_I"/>
    <property type="match status" value="1"/>
</dbReference>
<dbReference type="Pfam" id="PF05188">
    <property type="entry name" value="MutS_II"/>
    <property type="match status" value="1"/>
</dbReference>
<dbReference type="Pfam" id="PF05192">
    <property type="entry name" value="MutS_III"/>
    <property type="match status" value="1"/>
</dbReference>
<dbReference type="Pfam" id="PF05190">
    <property type="entry name" value="MutS_IV"/>
    <property type="match status" value="1"/>
</dbReference>
<dbReference type="Pfam" id="PF00488">
    <property type="entry name" value="MutS_V"/>
    <property type="match status" value="1"/>
</dbReference>
<dbReference type="PIRSF" id="PIRSF037677">
    <property type="entry name" value="DNA_mis_repair_Msh6"/>
    <property type="match status" value="1"/>
</dbReference>
<dbReference type="SMART" id="SM00534">
    <property type="entry name" value="MUTSac"/>
    <property type="match status" value="1"/>
</dbReference>
<dbReference type="SMART" id="SM00533">
    <property type="entry name" value="MUTSd"/>
    <property type="match status" value="1"/>
</dbReference>
<dbReference type="SUPFAM" id="SSF55271">
    <property type="entry name" value="DNA repair protein MutS, domain I"/>
    <property type="match status" value="1"/>
</dbReference>
<dbReference type="SUPFAM" id="SSF53150">
    <property type="entry name" value="DNA repair protein MutS, domain II"/>
    <property type="match status" value="1"/>
</dbReference>
<dbReference type="SUPFAM" id="SSF48334">
    <property type="entry name" value="DNA repair protein MutS, domain III"/>
    <property type="match status" value="1"/>
</dbReference>
<dbReference type="SUPFAM" id="SSF52540">
    <property type="entry name" value="P-loop containing nucleoside triphosphate hydrolases"/>
    <property type="match status" value="1"/>
</dbReference>
<dbReference type="PROSITE" id="PS00486">
    <property type="entry name" value="DNA_MISMATCH_REPAIR_2"/>
    <property type="match status" value="1"/>
</dbReference>
<sequence length="869" mass="94797">MMEQYYELKAQAQDCLLFYRMGDFFELFFDDAKKASAILDIALTSRGTHIEESIPMCGVPIHAAESYLARLIKAGCRVAIADQVETPAEAKKRGGSKALVKRAIIRVVTAGTLTEEALLDSRAANWLVAVARAGSDFGLAAADISTGRFETIALSEGRLDSELARLSAAEVIAPESLVQQEAYKNRIPQAVELSNECFNSPHGEARLKSIFKISTLDGFGIFSRAELAAIDGLLAWLDRAGQGKLPFLQQPVRRAYADHMLIDAATRSSLELTASTEGRRDGSLVSSIDHTVTGAGARLLTADLGAPLMDIDVIHKRLDLVEFFFYDTLLREDVRDLLKGSPDLARVLGRLVAGRGTPRDLSLLRDGLNQAFILYEKLFSLEHKPALLEQILPDFRGHGSLVDLLERALIEQPPIDATQGGFIAKGYDHALDELRSMGGESRRAIAALEATYREKTGINTLKIRHNNVLGYHIEVPSRHADALMQANSGFTHRQTLAGVVRFNASELHEQAIRATQAGVQAIAIESKHLACLIESTLEKRDNIAACADALARLDVSAGFADCAVQKNWTRPTVDDSCCFDVIQGRHPVVENALVKSGERFVANNTNLDPKNRLWLVTGPNMGGKSTFLRQNALLAVLAQTGSFVPAEKARIGLVDRLFSRVGASDNLARGRSTFMVEMVETAAILSQATNRSFVILDEVGRGTSTYDGLAIAWAVVEAVHDINACRCLFATHYHELTQLTSRLPALSLHHVRAKEWQGDLVLLHEMAEGAADRSYGIEVARLAGLPPVVLKRASEVLAQLENSSGKNNDSSANLSDLPLFGVQAFQTVLPQNNPLYDAVSELDADALTPRQALDIIYRLKELAAKDKVM</sequence>
<gene>
    <name evidence="1" type="primary">mutS</name>
    <name type="ordered locus">ZMO1907</name>
</gene>
<name>MUTS_ZYMMO</name>
<reference key="1">
    <citation type="journal article" date="2005" name="Nat. Biotechnol.">
        <title>The genome sequence of the ethanologenic bacterium Zymomonas mobilis ZM4.</title>
        <authorList>
            <person name="Seo J.-S."/>
            <person name="Chong H."/>
            <person name="Park H.S."/>
            <person name="Yoon K.-O."/>
            <person name="Jung C."/>
            <person name="Kim J.J."/>
            <person name="Hong J.H."/>
            <person name="Kim H."/>
            <person name="Kim J.-H."/>
            <person name="Kil J.-I."/>
            <person name="Park C.J."/>
            <person name="Oh H.-M."/>
            <person name="Lee J.-S."/>
            <person name="Jin S.-J."/>
            <person name="Um H.-W."/>
            <person name="Lee H.-J."/>
            <person name="Oh S.-J."/>
            <person name="Kim J.Y."/>
            <person name="Kang H.L."/>
            <person name="Lee S.Y."/>
            <person name="Lee K.J."/>
            <person name="Kang H.S."/>
        </authorList>
    </citation>
    <scope>NUCLEOTIDE SEQUENCE [LARGE SCALE GENOMIC DNA]</scope>
    <source>
        <strain>ATCC 31821 / ZM4 / CP4</strain>
    </source>
</reference>
<protein>
    <recommendedName>
        <fullName evidence="1">DNA mismatch repair protein MutS</fullName>
    </recommendedName>
</protein>
<evidence type="ECO:0000255" key="1">
    <source>
        <dbReference type="HAMAP-Rule" id="MF_00096"/>
    </source>
</evidence>